<name>RL31_PROA2</name>
<proteinExistence type="inferred from homology"/>
<feature type="chain" id="PRO_1000126686" description="Large ribosomal subunit protein bL31">
    <location>
        <begin position="1"/>
        <end position="72"/>
    </location>
</feature>
<evidence type="ECO:0000255" key="1">
    <source>
        <dbReference type="HAMAP-Rule" id="MF_00501"/>
    </source>
</evidence>
<evidence type="ECO:0000305" key="2"/>
<dbReference type="EMBL" id="CP001108">
    <property type="protein sequence ID" value="ACF46873.1"/>
    <property type="molecule type" value="Genomic_DNA"/>
</dbReference>
<dbReference type="RefSeq" id="WP_012506406.1">
    <property type="nucleotide sequence ID" value="NC_011059.1"/>
</dbReference>
<dbReference type="SMR" id="B4S4H7"/>
<dbReference type="STRING" id="290512.Paes_1861"/>
<dbReference type="KEGG" id="paa:Paes_1861"/>
<dbReference type="eggNOG" id="COG0254">
    <property type="taxonomic scope" value="Bacteria"/>
</dbReference>
<dbReference type="HOGENOM" id="CLU_114306_4_3_10"/>
<dbReference type="Proteomes" id="UP000002725">
    <property type="component" value="Chromosome"/>
</dbReference>
<dbReference type="GO" id="GO:1990904">
    <property type="term" value="C:ribonucleoprotein complex"/>
    <property type="evidence" value="ECO:0007669"/>
    <property type="project" value="UniProtKB-KW"/>
</dbReference>
<dbReference type="GO" id="GO:0005840">
    <property type="term" value="C:ribosome"/>
    <property type="evidence" value="ECO:0007669"/>
    <property type="project" value="UniProtKB-KW"/>
</dbReference>
<dbReference type="GO" id="GO:0019843">
    <property type="term" value="F:rRNA binding"/>
    <property type="evidence" value="ECO:0007669"/>
    <property type="project" value="UniProtKB-KW"/>
</dbReference>
<dbReference type="GO" id="GO:0003735">
    <property type="term" value="F:structural constituent of ribosome"/>
    <property type="evidence" value="ECO:0007669"/>
    <property type="project" value="InterPro"/>
</dbReference>
<dbReference type="GO" id="GO:0006412">
    <property type="term" value="P:translation"/>
    <property type="evidence" value="ECO:0007669"/>
    <property type="project" value="UniProtKB-UniRule"/>
</dbReference>
<dbReference type="Gene3D" id="4.10.830.30">
    <property type="entry name" value="Ribosomal protein L31"/>
    <property type="match status" value="1"/>
</dbReference>
<dbReference type="HAMAP" id="MF_00501">
    <property type="entry name" value="Ribosomal_bL31_1"/>
    <property type="match status" value="1"/>
</dbReference>
<dbReference type="InterPro" id="IPR034704">
    <property type="entry name" value="Ribosomal_bL28/bL31-like_sf"/>
</dbReference>
<dbReference type="InterPro" id="IPR002150">
    <property type="entry name" value="Ribosomal_bL31"/>
</dbReference>
<dbReference type="InterPro" id="IPR027491">
    <property type="entry name" value="Ribosomal_bL31_A"/>
</dbReference>
<dbReference type="InterPro" id="IPR042105">
    <property type="entry name" value="Ribosomal_bL31_sf"/>
</dbReference>
<dbReference type="NCBIfam" id="TIGR00105">
    <property type="entry name" value="L31"/>
    <property type="match status" value="1"/>
</dbReference>
<dbReference type="NCBIfam" id="NF000612">
    <property type="entry name" value="PRK00019.1"/>
    <property type="match status" value="1"/>
</dbReference>
<dbReference type="NCBIfam" id="NF001809">
    <property type="entry name" value="PRK00528.1"/>
    <property type="match status" value="1"/>
</dbReference>
<dbReference type="PANTHER" id="PTHR33280">
    <property type="entry name" value="50S RIBOSOMAL PROTEIN L31, CHLOROPLASTIC"/>
    <property type="match status" value="1"/>
</dbReference>
<dbReference type="PANTHER" id="PTHR33280:SF1">
    <property type="entry name" value="LARGE RIBOSOMAL SUBUNIT PROTEIN BL31C"/>
    <property type="match status" value="1"/>
</dbReference>
<dbReference type="Pfam" id="PF01197">
    <property type="entry name" value="Ribosomal_L31"/>
    <property type="match status" value="1"/>
</dbReference>
<dbReference type="PRINTS" id="PR01249">
    <property type="entry name" value="RIBOSOMALL31"/>
</dbReference>
<dbReference type="SUPFAM" id="SSF143800">
    <property type="entry name" value="L28p-like"/>
    <property type="match status" value="1"/>
</dbReference>
<dbReference type="PROSITE" id="PS01143">
    <property type="entry name" value="RIBOSOMAL_L31"/>
    <property type="match status" value="1"/>
</dbReference>
<organism>
    <name type="scientific">Prosthecochloris aestuarii (strain DSM 271 / SK 413)</name>
    <dbReference type="NCBI Taxonomy" id="290512"/>
    <lineage>
        <taxon>Bacteria</taxon>
        <taxon>Pseudomonadati</taxon>
        <taxon>Chlorobiota</taxon>
        <taxon>Chlorobiia</taxon>
        <taxon>Chlorobiales</taxon>
        <taxon>Chlorobiaceae</taxon>
        <taxon>Prosthecochloris</taxon>
    </lineage>
</organism>
<reference key="1">
    <citation type="submission" date="2008-06" db="EMBL/GenBank/DDBJ databases">
        <title>Complete sequence of chromosome of Prosthecochloris aestuarii DSM 271.</title>
        <authorList>
            <consortium name="US DOE Joint Genome Institute"/>
            <person name="Lucas S."/>
            <person name="Copeland A."/>
            <person name="Lapidus A."/>
            <person name="Glavina del Rio T."/>
            <person name="Dalin E."/>
            <person name="Tice H."/>
            <person name="Bruce D."/>
            <person name="Goodwin L."/>
            <person name="Pitluck S."/>
            <person name="Schmutz J."/>
            <person name="Larimer F."/>
            <person name="Land M."/>
            <person name="Hauser L."/>
            <person name="Kyrpides N."/>
            <person name="Anderson I."/>
            <person name="Liu Z."/>
            <person name="Li T."/>
            <person name="Zhao F."/>
            <person name="Overmann J."/>
            <person name="Bryant D.A."/>
            <person name="Richardson P."/>
        </authorList>
    </citation>
    <scope>NUCLEOTIDE SEQUENCE [LARGE SCALE GENOMIC DNA]</scope>
    <source>
        <strain>DSM 271 / SK 413</strain>
    </source>
</reference>
<gene>
    <name evidence="1" type="primary">rpmE</name>
    <name type="ordered locus">Paes_1861</name>
</gene>
<keyword id="KW-0687">Ribonucleoprotein</keyword>
<keyword id="KW-0689">Ribosomal protein</keyword>
<keyword id="KW-0694">RNA-binding</keyword>
<keyword id="KW-0699">rRNA-binding</keyword>
<sequence length="72" mass="8173">MKQDIHPKYTKVTVTCANCGKDFETRSTRSSIKVDICSNCHPFYTGKQVLVDTAGRVERFKKRFAKATSQSK</sequence>
<comment type="function">
    <text evidence="1">Binds the 23S rRNA.</text>
</comment>
<comment type="subunit">
    <text evidence="1">Part of the 50S ribosomal subunit.</text>
</comment>
<comment type="similarity">
    <text evidence="1">Belongs to the bacterial ribosomal protein bL31 family. Type A subfamily.</text>
</comment>
<accession>B4S4H7</accession>
<protein>
    <recommendedName>
        <fullName evidence="1">Large ribosomal subunit protein bL31</fullName>
    </recommendedName>
    <alternativeName>
        <fullName evidence="2">50S ribosomal protein L31</fullName>
    </alternativeName>
</protein>